<sequence length="1502" mass="172460">MMAKNKEPRPPSYTISIVGLSGTEKDKGNCGVGKSCLCNRFVRSKADEYYPEHTSVLSTIDFGGRVVNNDHFLYWGDIIQNSEDGVECKIHVIEQTEFIDDQTFLPHRSTNLQPYIKRAAASKLQSAEKLMYICTDQLGLEQDFEQKQMPEGKLNVDGFLLCIDVSQGCNRKFDDQLKFVNNLFVQLSKSKKPVIIAATKCDECVDHYLREVQAFASNKKNLLVVETSARFNVNIETCFTALVQMLDKTRSKPKIIPYLDAYKTQRQLVVTATDKFEKLVQTVRDYHATWKTVSNKLKNHPDYEEYINLEGTRKARNTFSKHIEQLKQEHIRKRREEYINTLPRAFNTLLPNLEEIEHLNWSEALKLMEKRADFQLCFVVLEKTPWDETDHIDKINDRRIPFDLLSTLEAEKVYQNHVQHLISEKRRVEMKEKFKKTLEKIQFISPGQPWEEVMCFVMEDEAYKYITEADSKEVYGRHQREIVEKAKEEFQEMLFEHSELFYDLDLNATPSSDKMSEIHTVLSEEPRYKALQKLAPDRESLLLKHIGFVYHPTKETCLSGQNCTDIKVEQLLASSLLQLDHGRLRLYHDSTNIDKVNLFILGKDGLAQELANEIRTQSTDDEYALDGKIYELDLRPVDAKSPYFLSQLWTAAFKPHGCFCVFNSIESLSFIGEFIGKIRTEASQIRKDKYMANLPFTLILANQRDSISKNLPILRHQGQQLANKLQCPFVDVPAGTYPRKFNETQIKQALRGVLESVKHNLDVVSPIPANKDLSEADLRIVMCAMCGDPFSVDLILSPFLDSHSCSAAQAGQNNSLMLDKIIGEKRRRIQITILSYHSSIGVRKDELVHGYILVYSAKRKASMGMLRAFLSEVQDTIPVQLVAVTDSQADFFENEAIKELMTEGEHIATEITAKFTALYSLSQYHRQTEVFTLFFSDVLEKKNMIENSYLSDNTRESTHQSEDVFLPSPRDCFPYNNYPDSDDDTEAPPPYSPIGDDVQLLPTPSDRSRYRLDLEGNEYPIHSTPNCHDHERNHKVPPPIKPKPVVPKTNVKKLDPNLLKTIEAGIGKNPRKQTSRVPLAHPEDMDPSDNYAEPIDTIFKQKGYSDEIYVVPDDSQNRIKIRNSFVNNTQGDEENGFSDRTSKSHGERRPSKYKYKSKTLFSKAKSYYRRTHSDASDDEAFTTSKTKRKGRHRGSEEDPLLSPVETWKGGIDNPAITSDQELDDKKMKKKTHKVKEDKKQKKKTKNFNPPTRRNWESNYFGMPLQDLVTAEKPIPLFVEKCVEFIEDTGLCTEGLYRVSGNKTDQDNIQKQFDQDHNINLVSMEVTVNAVAGALKAFFADLPDPLIPYSLHPELLEAAKIPDKTERLHALKEIVKKFHPVNYDVFRYVITHLNRVSQQHKINLMTADNLSICFWPTLMRPDFENREFLSTTKIHQSVVETFIQQCQFFFYNGEIVETTNIVAPPPPSNPGQLVEPMVPLQLPPPLQPQLIQPQLQTDPLGII</sequence>
<gene>
    <name type="primary">ARHGAP5</name>
    <name type="synonym">RHOGAP5</name>
</gene>
<dbReference type="EMBL" id="U17032">
    <property type="protein sequence ID" value="AAA95963.1"/>
    <property type="status" value="ALT_FRAME"/>
    <property type="molecule type" value="mRNA"/>
</dbReference>
<dbReference type="EMBL" id="CH471078">
    <property type="protein sequence ID" value="EAW65935.1"/>
    <property type="molecule type" value="Genomic_DNA"/>
</dbReference>
<dbReference type="EMBL" id="CH471078">
    <property type="protein sequence ID" value="EAW65936.1"/>
    <property type="molecule type" value="Genomic_DNA"/>
</dbReference>
<dbReference type="EMBL" id="CH471078">
    <property type="protein sequence ID" value="EAW65937.1"/>
    <property type="molecule type" value="Genomic_DNA"/>
</dbReference>
<dbReference type="EMBL" id="CH471078">
    <property type="protein sequence ID" value="EAW65938.1"/>
    <property type="molecule type" value="Genomic_DNA"/>
</dbReference>
<dbReference type="EMBL" id="BC032723">
    <property type="protein sequence ID" value="AAH32723.1"/>
    <property type="status" value="ALT_SEQ"/>
    <property type="molecule type" value="mRNA"/>
</dbReference>
<dbReference type="EMBL" id="BC050059">
    <property type="protein sequence ID" value="AAH50059.1"/>
    <property type="molecule type" value="mRNA"/>
</dbReference>
<dbReference type="EMBL" id="BC075799">
    <property type="protein sequence ID" value="AAH75799.1"/>
    <property type="molecule type" value="mRNA"/>
</dbReference>
<dbReference type="EMBL" id="BC129928">
    <property type="protein sequence ID" value="AAI29929.1"/>
    <property type="molecule type" value="mRNA"/>
</dbReference>
<dbReference type="EMBL" id="BC129929">
    <property type="protein sequence ID" value="AAI29930.1"/>
    <property type="molecule type" value="mRNA"/>
</dbReference>
<dbReference type="EMBL" id="AK292966">
    <property type="protein sequence ID" value="BAF85655.1"/>
    <property type="molecule type" value="mRNA"/>
</dbReference>
<dbReference type="EMBL" id="AB209751">
    <property type="protein sequence ID" value="BAD92988.1"/>
    <property type="molecule type" value="mRNA"/>
</dbReference>
<dbReference type="CCDS" id="CCDS32062.1">
    <molecule id="Q13017-1"/>
</dbReference>
<dbReference type="CCDS" id="CCDS45095.1">
    <molecule id="Q13017-2"/>
</dbReference>
<dbReference type="PIR" id="B59431">
    <property type="entry name" value="B59431"/>
</dbReference>
<dbReference type="RefSeq" id="NP_001025226.1">
    <molecule id="Q13017-1"/>
    <property type="nucleotide sequence ID" value="NM_001030055.2"/>
</dbReference>
<dbReference type="RefSeq" id="NP_001164.2">
    <molecule id="Q13017-2"/>
    <property type="nucleotide sequence ID" value="NM_001173.3"/>
</dbReference>
<dbReference type="RefSeq" id="XP_005267692.1">
    <property type="nucleotide sequence ID" value="XM_005267635.3"/>
</dbReference>
<dbReference type="RefSeq" id="XP_005267693.1">
    <property type="nucleotide sequence ID" value="XM_005267636.3"/>
</dbReference>
<dbReference type="RefSeq" id="XP_016876776.1">
    <property type="nucleotide sequence ID" value="XM_017021287.1"/>
</dbReference>
<dbReference type="RefSeq" id="XP_016876777.1">
    <property type="nucleotide sequence ID" value="XM_017021288.1"/>
</dbReference>
<dbReference type="PDB" id="2EE4">
    <property type="method" value="NMR"/>
    <property type="chains" value="A=1255-1456"/>
</dbReference>
<dbReference type="PDB" id="2EE5">
    <property type="method" value="NMR"/>
    <property type="chains" value="A=1245-1456"/>
</dbReference>
<dbReference type="PDB" id="5U4V">
    <property type="method" value="X-ray"/>
    <property type="resolution" value="2.60 A"/>
    <property type="chains" value="A=590-763"/>
</dbReference>
<dbReference type="PDBsum" id="2EE4"/>
<dbReference type="PDBsum" id="2EE5"/>
<dbReference type="PDBsum" id="5U4V"/>
<dbReference type="BMRB" id="Q13017"/>
<dbReference type="SMR" id="Q13017"/>
<dbReference type="BioGRID" id="106887">
    <property type="interactions" value="56"/>
</dbReference>
<dbReference type="FunCoup" id="Q13017">
    <property type="interactions" value="3371"/>
</dbReference>
<dbReference type="IntAct" id="Q13017">
    <property type="interactions" value="13"/>
</dbReference>
<dbReference type="MINT" id="Q13017"/>
<dbReference type="STRING" id="9606.ENSP00000371897"/>
<dbReference type="GlyGen" id="Q13017">
    <property type="glycosylation" value="2 sites, 1 N-linked glycan (1 site)"/>
</dbReference>
<dbReference type="iPTMnet" id="Q13017"/>
<dbReference type="PhosphoSitePlus" id="Q13017"/>
<dbReference type="BioMuta" id="ARHGAP5"/>
<dbReference type="DMDM" id="190358871"/>
<dbReference type="jPOST" id="Q13017"/>
<dbReference type="MassIVE" id="Q13017"/>
<dbReference type="PaxDb" id="9606-ENSP00000371897"/>
<dbReference type="PeptideAtlas" id="Q13017"/>
<dbReference type="ProteomicsDB" id="59102">
    <molecule id="Q13017-1"/>
</dbReference>
<dbReference type="ProteomicsDB" id="59103">
    <molecule id="Q13017-2"/>
</dbReference>
<dbReference type="ProteomicsDB" id="59104">
    <molecule id="Q13017-3"/>
</dbReference>
<dbReference type="ProteomicsDB" id="59105">
    <molecule id="Q13017-4"/>
</dbReference>
<dbReference type="Pumba" id="Q13017"/>
<dbReference type="Antibodypedia" id="23106">
    <property type="antibodies" value="158 antibodies from 28 providers"/>
</dbReference>
<dbReference type="DNASU" id="394"/>
<dbReference type="Ensembl" id="ENST00000345122.8">
    <molecule id="Q13017-1"/>
    <property type="protein sequence ID" value="ENSP00000371897.1"/>
    <property type="gene ID" value="ENSG00000100852.14"/>
</dbReference>
<dbReference type="Ensembl" id="ENST00000396582.6">
    <molecule id="Q13017-3"/>
    <property type="protein sequence ID" value="ENSP00000379827.2"/>
    <property type="gene ID" value="ENSG00000100852.14"/>
</dbReference>
<dbReference type="Ensembl" id="ENST00000433497.5">
    <molecule id="Q13017-4"/>
    <property type="protein sequence ID" value="ENSP00000407395.1"/>
    <property type="gene ID" value="ENSG00000100852.14"/>
</dbReference>
<dbReference type="Ensembl" id="ENST00000539826.6">
    <molecule id="Q13017-1"/>
    <property type="protein sequence ID" value="ENSP00000441692.2"/>
    <property type="gene ID" value="ENSG00000100852.14"/>
</dbReference>
<dbReference type="Ensembl" id="ENST00000556611.5">
    <molecule id="Q13017-2"/>
    <property type="protein sequence ID" value="ENSP00000452222.1"/>
    <property type="gene ID" value="ENSG00000100852.14"/>
</dbReference>
<dbReference type="GeneID" id="394"/>
<dbReference type="KEGG" id="hsa:394"/>
<dbReference type="MANE-Select" id="ENST00000345122.8">
    <property type="protein sequence ID" value="ENSP00000371897.1"/>
    <property type="RefSeq nucleotide sequence ID" value="NM_001030055.2"/>
    <property type="RefSeq protein sequence ID" value="NP_001025226.1"/>
</dbReference>
<dbReference type="UCSC" id="uc001wrl.4">
    <molecule id="Q13017-1"/>
    <property type="organism name" value="human"/>
</dbReference>
<dbReference type="AGR" id="HGNC:675"/>
<dbReference type="CTD" id="394"/>
<dbReference type="DisGeNET" id="394"/>
<dbReference type="GeneCards" id="ARHGAP5"/>
<dbReference type="HGNC" id="HGNC:675">
    <property type="gene designation" value="ARHGAP5"/>
</dbReference>
<dbReference type="HPA" id="ENSG00000100852">
    <property type="expression patterns" value="Low tissue specificity"/>
</dbReference>
<dbReference type="MIM" id="602680">
    <property type="type" value="gene"/>
</dbReference>
<dbReference type="neXtProt" id="NX_Q13017"/>
<dbReference type="OpenTargets" id="ENSG00000100852"/>
<dbReference type="PharmGKB" id="PA24959"/>
<dbReference type="VEuPathDB" id="HostDB:ENSG00000100852"/>
<dbReference type="eggNOG" id="KOG4271">
    <property type="taxonomic scope" value="Eukaryota"/>
</dbReference>
<dbReference type="GeneTree" id="ENSGT00940000154553"/>
<dbReference type="HOGENOM" id="CLU_004268_0_0_1"/>
<dbReference type="InParanoid" id="Q13017"/>
<dbReference type="OMA" id="RIVKMRN"/>
<dbReference type="OrthoDB" id="9994905at2759"/>
<dbReference type="PAN-GO" id="Q13017">
    <property type="GO annotations" value="4 GO annotations based on evolutionary models"/>
</dbReference>
<dbReference type="PhylomeDB" id="Q13017"/>
<dbReference type="TreeFam" id="TF324451"/>
<dbReference type="PathwayCommons" id="Q13017"/>
<dbReference type="Reactome" id="R-HSA-8980692">
    <property type="pathway name" value="RHOA GTPase cycle"/>
</dbReference>
<dbReference type="Reactome" id="R-HSA-9013026">
    <property type="pathway name" value="RHOB GTPase cycle"/>
</dbReference>
<dbReference type="Reactome" id="R-HSA-9013106">
    <property type="pathway name" value="RHOC GTPase cycle"/>
</dbReference>
<dbReference type="Reactome" id="R-HSA-9013148">
    <property type="pathway name" value="CDC42 GTPase cycle"/>
</dbReference>
<dbReference type="Reactome" id="R-HSA-9013149">
    <property type="pathway name" value="RAC1 GTPase cycle"/>
</dbReference>
<dbReference type="Reactome" id="R-HSA-9013405">
    <property type="pathway name" value="RHOD GTPase cycle"/>
</dbReference>
<dbReference type="Reactome" id="R-HSA-9013406">
    <property type="pathway name" value="RHOQ GTPase cycle"/>
</dbReference>
<dbReference type="Reactome" id="R-HSA-9013408">
    <property type="pathway name" value="RHOG GTPase cycle"/>
</dbReference>
<dbReference type="Reactome" id="R-HSA-9013409">
    <property type="pathway name" value="RHOJ GTPase cycle"/>
</dbReference>
<dbReference type="Reactome" id="R-HSA-9013423">
    <property type="pathway name" value="RAC3 GTPase cycle"/>
</dbReference>
<dbReference type="Reactome" id="R-HSA-9035034">
    <property type="pathway name" value="RHOF GTPase cycle"/>
</dbReference>
<dbReference type="Reactome" id="R-HSA-9696264">
    <property type="pathway name" value="RND3 GTPase cycle"/>
</dbReference>
<dbReference type="Reactome" id="R-HSA-9696270">
    <property type="pathway name" value="RND2 GTPase cycle"/>
</dbReference>
<dbReference type="Reactome" id="R-HSA-9696273">
    <property type="pathway name" value="RND1 GTPase cycle"/>
</dbReference>
<dbReference type="SignaLink" id="Q13017"/>
<dbReference type="SIGNOR" id="Q13017"/>
<dbReference type="BioGRID-ORCS" id="394">
    <property type="hits" value="30 hits in 1161 CRISPR screens"/>
</dbReference>
<dbReference type="ChiTaRS" id="ARHGAP5">
    <property type="organism name" value="human"/>
</dbReference>
<dbReference type="EvolutionaryTrace" id="Q13017"/>
<dbReference type="GeneWiki" id="ARHGAP5"/>
<dbReference type="GenomeRNAi" id="394"/>
<dbReference type="Pharos" id="Q13017">
    <property type="development level" value="Tbio"/>
</dbReference>
<dbReference type="PRO" id="PR:Q13017"/>
<dbReference type="Proteomes" id="UP000005640">
    <property type="component" value="Chromosome 14"/>
</dbReference>
<dbReference type="RNAct" id="Q13017">
    <property type="molecule type" value="protein"/>
</dbReference>
<dbReference type="Bgee" id="ENSG00000100852">
    <property type="expression patterns" value="Expressed in calcaneal tendon and 205 other cell types or tissues"/>
</dbReference>
<dbReference type="ExpressionAtlas" id="Q13017">
    <property type="expression patterns" value="baseline and differential"/>
</dbReference>
<dbReference type="GO" id="GO:0005737">
    <property type="term" value="C:cytoplasm"/>
    <property type="evidence" value="ECO:0000304"/>
    <property type="project" value="ProtInc"/>
</dbReference>
<dbReference type="GO" id="GO:0005829">
    <property type="term" value="C:cytosol"/>
    <property type="evidence" value="ECO:0000314"/>
    <property type="project" value="HPA"/>
</dbReference>
<dbReference type="GO" id="GO:0005783">
    <property type="term" value="C:endoplasmic reticulum"/>
    <property type="evidence" value="ECO:0000314"/>
    <property type="project" value="HPA"/>
</dbReference>
<dbReference type="GO" id="GO:0005886">
    <property type="term" value="C:plasma membrane"/>
    <property type="evidence" value="ECO:0007669"/>
    <property type="project" value="UniProtKB-SubCell"/>
</dbReference>
<dbReference type="GO" id="GO:0005096">
    <property type="term" value="F:GTPase activator activity"/>
    <property type="evidence" value="ECO:0000318"/>
    <property type="project" value="GO_Central"/>
</dbReference>
<dbReference type="GO" id="GO:0003924">
    <property type="term" value="F:GTPase activity"/>
    <property type="evidence" value="ECO:0000304"/>
    <property type="project" value="ProtInc"/>
</dbReference>
<dbReference type="GO" id="GO:0042169">
    <property type="term" value="F:SH2 domain binding"/>
    <property type="evidence" value="ECO:0000353"/>
    <property type="project" value="UniProtKB"/>
</dbReference>
<dbReference type="GO" id="GO:0007155">
    <property type="term" value="P:cell adhesion"/>
    <property type="evidence" value="ECO:0000304"/>
    <property type="project" value="ProtInc"/>
</dbReference>
<dbReference type="GO" id="GO:0010631">
    <property type="term" value="P:epithelial cell migration"/>
    <property type="evidence" value="ECO:0007669"/>
    <property type="project" value="Ensembl"/>
</dbReference>
<dbReference type="GO" id="GO:0030879">
    <property type="term" value="P:mammary gland development"/>
    <property type="evidence" value="ECO:0007669"/>
    <property type="project" value="Ensembl"/>
</dbReference>
<dbReference type="GO" id="GO:0010634">
    <property type="term" value="P:positive regulation of epithelial cell migration"/>
    <property type="evidence" value="ECO:0007669"/>
    <property type="project" value="Ensembl"/>
</dbReference>
<dbReference type="GO" id="GO:0002053">
    <property type="term" value="P:positive regulation of mesenchymal cell proliferation"/>
    <property type="evidence" value="ECO:0007669"/>
    <property type="project" value="Ensembl"/>
</dbReference>
<dbReference type="GO" id="GO:0008361">
    <property type="term" value="P:regulation of cell size"/>
    <property type="evidence" value="ECO:0000318"/>
    <property type="project" value="GO_Central"/>
</dbReference>
<dbReference type="GO" id="GO:0051056">
    <property type="term" value="P:regulation of small GTPase mediated signal transduction"/>
    <property type="evidence" value="ECO:0000304"/>
    <property type="project" value="Reactome"/>
</dbReference>
<dbReference type="GO" id="GO:0007266">
    <property type="term" value="P:Rho protein signal transduction"/>
    <property type="evidence" value="ECO:0000318"/>
    <property type="project" value="GO_Central"/>
</dbReference>
<dbReference type="CDD" id="cd22220">
    <property type="entry name" value="pseudoGTPaseD_p190RhoGAP-B"/>
    <property type="match status" value="1"/>
</dbReference>
<dbReference type="CDD" id="cd04373">
    <property type="entry name" value="RhoGAP_p190"/>
    <property type="match status" value="1"/>
</dbReference>
<dbReference type="FunFam" id="1.10.10.440:FF:000007">
    <property type="entry name" value="Putative rho GTPase-activating protein 5"/>
    <property type="match status" value="1"/>
</dbReference>
<dbReference type="FunFam" id="3.40.50.300:FF:000349">
    <property type="entry name" value="Rho GTPase-activating protein 5"/>
    <property type="match status" value="1"/>
</dbReference>
<dbReference type="FunFam" id="1.10.555.10:FF:000021">
    <property type="entry name" value="rho GTPase-activating protein 5"/>
    <property type="match status" value="1"/>
</dbReference>
<dbReference type="FunFam" id="1.10.10.440:FF:000014">
    <property type="entry name" value="rho GTPase-activating protein 5 isoform X1"/>
    <property type="match status" value="1"/>
</dbReference>
<dbReference type="Gene3D" id="1.10.10.440">
    <property type="entry name" value="FF domain"/>
    <property type="match status" value="3"/>
</dbReference>
<dbReference type="Gene3D" id="3.40.50.300">
    <property type="entry name" value="P-loop containing nucleotide triphosphate hydrolases"/>
    <property type="match status" value="1"/>
</dbReference>
<dbReference type="Gene3D" id="1.10.555.10">
    <property type="entry name" value="Rho GTPase activation protein"/>
    <property type="match status" value="1"/>
</dbReference>
<dbReference type="InterPro" id="IPR002713">
    <property type="entry name" value="FF_domain"/>
</dbReference>
<dbReference type="InterPro" id="IPR036517">
    <property type="entry name" value="FF_domain_sf"/>
</dbReference>
<dbReference type="InterPro" id="IPR027417">
    <property type="entry name" value="P-loop_NTPase"/>
</dbReference>
<dbReference type="InterPro" id="IPR039007">
    <property type="entry name" value="pG1"/>
</dbReference>
<dbReference type="InterPro" id="IPR051978">
    <property type="entry name" value="Rho-GAP_domain"/>
</dbReference>
<dbReference type="InterPro" id="IPR008936">
    <property type="entry name" value="Rho_GTPase_activation_prot"/>
</dbReference>
<dbReference type="InterPro" id="IPR032835">
    <property type="entry name" value="RhoGAP-FF1"/>
</dbReference>
<dbReference type="InterPro" id="IPR000198">
    <property type="entry name" value="RhoGAP_dom"/>
</dbReference>
<dbReference type="InterPro" id="IPR045786">
    <property type="entry name" value="RhoGAP_pG1_pG2"/>
</dbReference>
<dbReference type="InterPro" id="IPR039006">
    <property type="entry name" value="RhoGAP_pG2"/>
</dbReference>
<dbReference type="PANTHER" id="PTHR46005">
    <property type="entry name" value="RHO GTPASE-ACTIVATING PROTEIN 190"/>
    <property type="match status" value="1"/>
</dbReference>
<dbReference type="PANTHER" id="PTHR46005:SF2">
    <property type="entry name" value="RHO GTPASE-ACTIVATING PROTEIN 5"/>
    <property type="match status" value="1"/>
</dbReference>
<dbReference type="Pfam" id="PF01846">
    <property type="entry name" value="FF"/>
    <property type="match status" value="1"/>
</dbReference>
<dbReference type="Pfam" id="PF23083">
    <property type="entry name" value="FF_RHG35_4th"/>
    <property type="match status" value="1"/>
</dbReference>
<dbReference type="Pfam" id="PF00620">
    <property type="entry name" value="RhoGAP"/>
    <property type="match status" value="1"/>
</dbReference>
<dbReference type="Pfam" id="PF16512">
    <property type="entry name" value="RhoGAP-FF1"/>
    <property type="match status" value="1"/>
</dbReference>
<dbReference type="Pfam" id="PF19518">
    <property type="entry name" value="RhoGAP_pG1_pG2"/>
    <property type="match status" value="1"/>
</dbReference>
<dbReference type="PRINTS" id="PR00449">
    <property type="entry name" value="RASTRNSFRMNG"/>
</dbReference>
<dbReference type="SMART" id="SM00441">
    <property type="entry name" value="FF"/>
    <property type="match status" value="4"/>
</dbReference>
<dbReference type="SMART" id="SM00324">
    <property type="entry name" value="RhoGAP"/>
    <property type="match status" value="1"/>
</dbReference>
<dbReference type="SUPFAM" id="SSF81698">
    <property type="entry name" value="FF domain"/>
    <property type="match status" value="1"/>
</dbReference>
<dbReference type="SUPFAM" id="SSF48350">
    <property type="entry name" value="GTPase activation domain, GAP"/>
    <property type="match status" value="1"/>
</dbReference>
<dbReference type="SUPFAM" id="SSF52540">
    <property type="entry name" value="P-loop containing nucleoside triphosphate hydrolases"/>
    <property type="match status" value="1"/>
</dbReference>
<dbReference type="PROSITE" id="PS51676">
    <property type="entry name" value="FF"/>
    <property type="match status" value="4"/>
</dbReference>
<dbReference type="PROSITE" id="PS51852">
    <property type="entry name" value="PG1"/>
    <property type="match status" value="1"/>
</dbReference>
<dbReference type="PROSITE" id="PS51853">
    <property type="entry name" value="PG2"/>
    <property type="match status" value="1"/>
</dbReference>
<dbReference type="PROSITE" id="PS50238">
    <property type="entry name" value="RHOGAP"/>
    <property type="match status" value="1"/>
</dbReference>
<proteinExistence type="evidence at protein level"/>
<keyword id="KW-0002">3D-structure</keyword>
<keyword id="KW-0025">Alternative splicing</keyword>
<keyword id="KW-1003">Cell membrane</keyword>
<keyword id="KW-0963">Cytoplasm</keyword>
<keyword id="KW-0343">GTPase activation</keyword>
<keyword id="KW-0472">Membrane</keyword>
<keyword id="KW-0944">Nitration</keyword>
<keyword id="KW-0597">Phosphoprotein</keyword>
<keyword id="KW-1267">Proteomics identification</keyword>
<keyword id="KW-1185">Reference proteome</keyword>
<keyword id="KW-0677">Repeat</keyword>
<evidence type="ECO:0000255" key="1">
    <source>
        <dbReference type="PROSITE-ProRule" id="PRU00172"/>
    </source>
</evidence>
<evidence type="ECO:0000255" key="2">
    <source>
        <dbReference type="PROSITE-ProRule" id="PRU01013"/>
    </source>
</evidence>
<evidence type="ECO:0000255" key="3">
    <source>
        <dbReference type="PROSITE-ProRule" id="PRU01199"/>
    </source>
</evidence>
<evidence type="ECO:0000255" key="4">
    <source>
        <dbReference type="PROSITE-ProRule" id="PRU01200"/>
    </source>
</evidence>
<evidence type="ECO:0000256" key="5">
    <source>
        <dbReference type="SAM" id="MobiDB-lite"/>
    </source>
</evidence>
<evidence type="ECO:0000269" key="6">
    <source>
    </source>
</evidence>
<evidence type="ECO:0000269" key="7">
    <source>
    </source>
</evidence>
<evidence type="ECO:0000303" key="8">
    <source>
    </source>
</evidence>
<evidence type="ECO:0000303" key="9">
    <source>
    </source>
</evidence>
<evidence type="ECO:0000303" key="10">
    <source>
    </source>
</evidence>
<evidence type="ECO:0000303" key="11">
    <source ref="5"/>
</evidence>
<evidence type="ECO:0000305" key="12"/>
<evidence type="ECO:0000305" key="13">
    <source>
    </source>
</evidence>
<evidence type="ECO:0007744" key="14">
    <source>
        <dbReference type="PDB" id="5U4V"/>
    </source>
</evidence>
<evidence type="ECO:0007744" key="15">
    <source>
    </source>
</evidence>
<evidence type="ECO:0007744" key="16">
    <source>
    </source>
</evidence>
<evidence type="ECO:0007744" key="17">
    <source>
    </source>
</evidence>
<evidence type="ECO:0007744" key="18">
    <source>
    </source>
</evidence>
<evidence type="ECO:0007744" key="19">
    <source>
    </source>
</evidence>
<evidence type="ECO:0007744" key="20">
    <source>
    </source>
</evidence>
<evidence type="ECO:0007744" key="21">
    <source>
    </source>
</evidence>
<evidence type="ECO:0007744" key="22">
    <source>
    </source>
</evidence>
<evidence type="ECO:0007829" key="23">
    <source>
        <dbReference type="PDB" id="2EE4"/>
    </source>
</evidence>
<evidence type="ECO:0007829" key="24">
    <source>
        <dbReference type="PDB" id="2EE5"/>
    </source>
</evidence>
<evidence type="ECO:0007829" key="25">
    <source>
        <dbReference type="PDB" id="5U4V"/>
    </source>
</evidence>
<reference key="1">
    <citation type="journal article" date="1995" name="J. Biol. Chem.">
        <title>p190-B, a new member of the Rho GAP family, and Rho are induced to cluster after integrin cross-linking.</title>
        <authorList>
            <person name="Burbelo P.D."/>
            <person name="Miyamoto S."/>
            <person name="Utani A."/>
            <person name="Brill S."/>
            <person name="Yamada K.M."/>
            <person name="Hall A."/>
            <person name="Yamada Y."/>
        </authorList>
    </citation>
    <scope>NUCLEOTIDE SEQUENCE [MRNA] (ISOFORM 1)</scope>
    <scope>FUNCTION</scope>
    <scope>SUBUNIT</scope>
    <scope>SUBCELLULAR LOCATION</scope>
    <scope>TISSUE SPECIFICITY</scope>
    <source>
        <tissue>Mesangial cell</tissue>
    </source>
</reference>
<reference key="2">
    <citation type="submission" date="2005-09" db="EMBL/GenBank/DDBJ databases">
        <authorList>
            <person name="Mural R.J."/>
            <person name="Istrail S."/>
            <person name="Sutton G.G."/>
            <person name="Florea L."/>
            <person name="Halpern A.L."/>
            <person name="Mobarry C.M."/>
            <person name="Lippert R."/>
            <person name="Walenz B."/>
            <person name="Shatkay H."/>
            <person name="Dew I."/>
            <person name="Miller J.R."/>
            <person name="Flanigan M.J."/>
            <person name="Edwards N.J."/>
            <person name="Bolanos R."/>
            <person name="Fasulo D."/>
            <person name="Halldorsson B.V."/>
            <person name="Hannenhalli S."/>
            <person name="Turner R."/>
            <person name="Yooseph S."/>
            <person name="Lu F."/>
            <person name="Nusskern D.R."/>
            <person name="Shue B.C."/>
            <person name="Zheng X.H."/>
            <person name="Zhong F."/>
            <person name="Delcher A.L."/>
            <person name="Huson D.H."/>
            <person name="Kravitz S.A."/>
            <person name="Mouchard L."/>
            <person name="Reinert K."/>
            <person name="Remington K.A."/>
            <person name="Clark A.G."/>
            <person name="Waterman M.S."/>
            <person name="Eichler E.E."/>
            <person name="Adams M.D."/>
            <person name="Hunkapiller M.W."/>
            <person name="Myers E.W."/>
            <person name="Venter J.C."/>
        </authorList>
    </citation>
    <scope>NUCLEOTIDE SEQUENCE [LARGE SCALE GENOMIC DNA]</scope>
</reference>
<reference key="3">
    <citation type="journal article" date="2004" name="Genome Res.">
        <title>The status, quality, and expansion of the NIH full-length cDNA project: the Mammalian Gene Collection (MGC).</title>
        <authorList>
            <consortium name="The MGC Project Team"/>
        </authorList>
    </citation>
    <scope>NUCLEOTIDE SEQUENCE [LARGE SCALE MRNA] (ISOFORMS 1; 3 AND 4)</scope>
    <source>
        <tissue>Brain</tissue>
        <tissue>Testis</tissue>
        <tissue>Uterus</tissue>
    </source>
</reference>
<reference key="4">
    <citation type="journal article" date="2004" name="Nat. Genet.">
        <title>Complete sequencing and characterization of 21,243 full-length human cDNAs.</title>
        <authorList>
            <person name="Ota T."/>
            <person name="Suzuki Y."/>
            <person name="Nishikawa T."/>
            <person name="Otsuki T."/>
            <person name="Sugiyama T."/>
            <person name="Irie R."/>
            <person name="Wakamatsu A."/>
            <person name="Hayashi K."/>
            <person name="Sato H."/>
            <person name="Nagai K."/>
            <person name="Kimura K."/>
            <person name="Makita H."/>
            <person name="Sekine M."/>
            <person name="Obayashi M."/>
            <person name="Nishi T."/>
            <person name="Shibahara T."/>
            <person name="Tanaka T."/>
            <person name="Ishii S."/>
            <person name="Yamamoto J."/>
            <person name="Saito K."/>
            <person name="Kawai Y."/>
            <person name="Isono Y."/>
            <person name="Nakamura Y."/>
            <person name="Nagahari K."/>
            <person name="Murakami K."/>
            <person name="Yasuda T."/>
            <person name="Iwayanagi T."/>
            <person name="Wagatsuma M."/>
            <person name="Shiratori A."/>
            <person name="Sudo H."/>
            <person name="Hosoiri T."/>
            <person name="Kaku Y."/>
            <person name="Kodaira H."/>
            <person name="Kondo H."/>
            <person name="Sugawara M."/>
            <person name="Takahashi M."/>
            <person name="Kanda K."/>
            <person name="Yokoi T."/>
            <person name="Furuya T."/>
            <person name="Kikkawa E."/>
            <person name="Omura Y."/>
            <person name="Abe K."/>
            <person name="Kamihara K."/>
            <person name="Katsuta N."/>
            <person name="Sato K."/>
            <person name="Tanikawa M."/>
            <person name="Yamazaki M."/>
            <person name="Ninomiya K."/>
            <person name="Ishibashi T."/>
            <person name="Yamashita H."/>
            <person name="Murakawa K."/>
            <person name="Fujimori K."/>
            <person name="Tanai H."/>
            <person name="Kimata M."/>
            <person name="Watanabe M."/>
            <person name="Hiraoka S."/>
            <person name="Chiba Y."/>
            <person name="Ishida S."/>
            <person name="Ono Y."/>
            <person name="Takiguchi S."/>
            <person name="Watanabe S."/>
            <person name="Yosida M."/>
            <person name="Hotuta T."/>
            <person name="Kusano J."/>
            <person name="Kanehori K."/>
            <person name="Takahashi-Fujii A."/>
            <person name="Hara H."/>
            <person name="Tanase T.-O."/>
            <person name="Nomura Y."/>
            <person name="Togiya S."/>
            <person name="Komai F."/>
            <person name="Hara R."/>
            <person name="Takeuchi K."/>
            <person name="Arita M."/>
            <person name="Imose N."/>
            <person name="Musashino K."/>
            <person name="Yuuki H."/>
            <person name="Oshima A."/>
            <person name="Sasaki N."/>
            <person name="Aotsuka S."/>
            <person name="Yoshikawa Y."/>
            <person name="Matsunawa H."/>
            <person name="Ichihara T."/>
            <person name="Shiohata N."/>
            <person name="Sano S."/>
            <person name="Moriya S."/>
            <person name="Momiyama H."/>
            <person name="Satoh N."/>
            <person name="Takami S."/>
            <person name="Terashima Y."/>
            <person name="Suzuki O."/>
            <person name="Nakagawa S."/>
            <person name="Senoh A."/>
            <person name="Mizoguchi H."/>
            <person name="Goto Y."/>
            <person name="Shimizu F."/>
            <person name="Wakebe H."/>
            <person name="Hishigaki H."/>
            <person name="Watanabe T."/>
            <person name="Sugiyama A."/>
            <person name="Takemoto M."/>
            <person name="Kawakami B."/>
            <person name="Yamazaki M."/>
            <person name="Watanabe K."/>
            <person name="Kumagai A."/>
            <person name="Itakura S."/>
            <person name="Fukuzumi Y."/>
            <person name="Fujimori Y."/>
            <person name="Komiyama M."/>
            <person name="Tashiro H."/>
            <person name="Tanigami A."/>
            <person name="Fujiwara T."/>
            <person name="Ono T."/>
            <person name="Yamada K."/>
            <person name="Fujii Y."/>
            <person name="Ozaki K."/>
            <person name="Hirao M."/>
            <person name="Ohmori Y."/>
            <person name="Kawabata A."/>
            <person name="Hikiji T."/>
            <person name="Kobatake N."/>
            <person name="Inagaki H."/>
            <person name="Ikema Y."/>
            <person name="Okamoto S."/>
            <person name="Okitani R."/>
            <person name="Kawakami T."/>
            <person name="Noguchi S."/>
            <person name="Itoh T."/>
            <person name="Shigeta K."/>
            <person name="Senba T."/>
            <person name="Matsumura K."/>
            <person name="Nakajima Y."/>
            <person name="Mizuno T."/>
            <person name="Morinaga M."/>
            <person name="Sasaki M."/>
            <person name="Togashi T."/>
            <person name="Oyama M."/>
            <person name="Hata H."/>
            <person name="Watanabe M."/>
            <person name="Komatsu T."/>
            <person name="Mizushima-Sugano J."/>
            <person name="Satoh T."/>
            <person name="Shirai Y."/>
            <person name="Takahashi Y."/>
            <person name="Nakagawa K."/>
            <person name="Okumura K."/>
            <person name="Nagase T."/>
            <person name="Nomura N."/>
            <person name="Kikuchi H."/>
            <person name="Masuho Y."/>
            <person name="Yamashita R."/>
            <person name="Nakai K."/>
            <person name="Yada T."/>
            <person name="Nakamura Y."/>
            <person name="Ohara O."/>
            <person name="Isogai T."/>
            <person name="Sugano S."/>
        </authorList>
    </citation>
    <scope>NUCLEOTIDE SEQUENCE [LARGE SCALE MRNA] OF 1-1239 (ISOFORM 1)</scope>
    <source>
        <tissue>Trachea</tissue>
    </source>
</reference>
<reference key="5">
    <citation type="submission" date="2005-03" db="EMBL/GenBank/DDBJ databases">
        <authorList>
            <person name="Totoki Y."/>
            <person name="Toyoda A."/>
            <person name="Takeda T."/>
            <person name="Sakaki Y."/>
            <person name="Tanaka A."/>
            <person name="Yokoyama S."/>
            <person name="Ohara O."/>
            <person name="Nagase T."/>
            <person name="Kikuno R.F."/>
        </authorList>
    </citation>
    <scope>NUCLEOTIDE SEQUENCE [LARGE SCALE MRNA] OF 364-1499 (ISOFORM 2)</scope>
    <source>
        <tissue>Brain</tissue>
    </source>
</reference>
<reference key="6">
    <citation type="journal article" date="2006" name="Anal. Biochem.">
        <title>Nitroproteins from a human pituitary adenoma tissue discovered with a nitrotyrosine affinity column and tandem mass spectrometry.</title>
        <authorList>
            <person name="Zhan X."/>
            <person name="Desiderio D.M."/>
        </authorList>
    </citation>
    <scope>NITRATION [LARGE SCALE ANALYSIS] AT TYR-550</scope>
    <scope>IDENTIFICATION BY MASS SPECTROMETRY [LARGE SCALE ANALYSIS]</scope>
    <source>
        <tissue>Pituitary adenoma</tissue>
    </source>
</reference>
<reference key="7">
    <citation type="journal article" date="2008" name="Mol. Cell">
        <title>Kinase-selective enrichment enables quantitative phosphoproteomics of the kinome across the cell cycle.</title>
        <authorList>
            <person name="Daub H."/>
            <person name="Olsen J.V."/>
            <person name="Bairlein M."/>
            <person name="Gnad F."/>
            <person name="Oppermann F.S."/>
            <person name="Korner R."/>
            <person name="Greff Z."/>
            <person name="Keri G."/>
            <person name="Stemmann O."/>
            <person name="Mann M."/>
        </authorList>
    </citation>
    <scope>PHOSPHORYLATION [LARGE SCALE ANALYSIS] AT SER-765 AND SER-1202</scope>
    <scope>IDENTIFICATION BY MASS SPECTROMETRY [LARGE SCALE ANALYSIS]</scope>
    <source>
        <tissue>Cervix carcinoma</tissue>
    </source>
</reference>
<reference key="8">
    <citation type="journal article" date="2008" name="Proc. Natl. Acad. Sci. U.S.A.">
        <title>A quantitative atlas of mitotic phosphorylation.</title>
        <authorList>
            <person name="Dephoure N."/>
            <person name="Zhou C."/>
            <person name="Villen J."/>
            <person name="Beausoleil S.A."/>
            <person name="Bakalarski C.E."/>
            <person name="Elledge S.J."/>
            <person name="Gygi S.P."/>
        </authorList>
    </citation>
    <scope>PHOSPHORYLATION [LARGE SCALE ANALYSIS] AT SER-968; SER-1115; SER-1176; SER-1195; SER-1202 AND SER-1218</scope>
    <scope>IDENTIFICATION BY MASS SPECTROMETRY [LARGE SCALE ANALYSIS]</scope>
    <source>
        <tissue>Cervix carcinoma</tissue>
    </source>
</reference>
<reference key="9">
    <citation type="journal article" date="2009" name="Anal. Chem.">
        <title>Lys-N and trypsin cover complementary parts of the phosphoproteome in a refined SCX-based approach.</title>
        <authorList>
            <person name="Gauci S."/>
            <person name="Helbig A.O."/>
            <person name="Slijper M."/>
            <person name="Krijgsveld J."/>
            <person name="Heck A.J."/>
            <person name="Mohammed S."/>
        </authorList>
    </citation>
    <scope>IDENTIFICATION BY MASS SPECTROMETRY [LARGE SCALE ANALYSIS]</scope>
</reference>
<reference key="10">
    <citation type="journal article" date="2009" name="Sci. Signal.">
        <title>Quantitative phosphoproteomic analysis of T cell receptor signaling reveals system-wide modulation of protein-protein interactions.</title>
        <authorList>
            <person name="Mayya V."/>
            <person name="Lundgren D.H."/>
            <person name="Hwang S.-I."/>
            <person name="Rezaul K."/>
            <person name="Wu L."/>
            <person name="Eng J.K."/>
            <person name="Rodionov V."/>
            <person name="Han D.K."/>
        </authorList>
    </citation>
    <scope>PHOSPHORYLATION [LARGE SCALE ANALYSIS] AT SER-1195 AND SER-1202</scope>
    <scope>IDENTIFICATION BY MASS SPECTROMETRY [LARGE SCALE ANALYSIS]</scope>
    <source>
        <tissue>Leukemic T-cell</tissue>
    </source>
</reference>
<reference key="11">
    <citation type="journal article" date="2010" name="Sci. Signal.">
        <title>Quantitative phosphoproteomics reveals widespread full phosphorylation site occupancy during mitosis.</title>
        <authorList>
            <person name="Olsen J.V."/>
            <person name="Vermeulen M."/>
            <person name="Santamaria A."/>
            <person name="Kumar C."/>
            <person name="Miller M.L."/>
            <person name="Jensen L.J."/>
            <person name="Gnad F."/>
            <person name="Cox J."/>
            <person name="Jensen T.S."/>
            <person name="Nigg E.A."/>
            <person name="Brunak S."/>
            <person name="Mann M."/>
        </authorList>
    </citation>
    <scope>PHOSPHORYLATION [LARGE SCALE ANALYSIS] AT SER-765; SER-951 AND SER-1202</scope>
    <scope>IDENTIFICATION BY MASS SPECTROMETRY [LARGE SCALE ANALYSIS]</scope>
    <source>
        <tissue>Cervix carcinoma</tissue>
    </source>
</reference>
<reference key="12">
    <citation type="journal article" date="2011" name="BMC Syst. Biol.">
        <title>Initial characterization of the human central proteome.</title>
        <authorList>
            <person name="Burkard T.R."/>
            <person name="Planyavsky M."/>
            <person name="Kaupe I."/>
            <person name="Breitwieser F.P."/>
            <person name="Buerckstuemmer T."/>
            <person name="Bennett K.L."/>
            <person name="Superti-Furga G."/>
            <person name="Colinge J."/>
        </authorList>
    </citation>
    <scope>IDENTIFICATION BY MASS SPECTROMETRY [LARGE SCALE ANALYSIS]</scope>
</reference>
<reference key="13">
    <citation type="journal article" date="2011" name="Sci. Signal.">
        <title>System-wide temporal characterization of the proteome and phosphoproteome of human embryonic stem cell differentiation.</title>
        <authorList>
            <person name="Rigbolt K.T."/>
            <person name="Prokhorova T.A."/>
            <person name="Akimov V."/>
            <person name="Henningsen J."/>
            <person name="Johansen P.T."/>
            <person name="Kratchmarova I."/>
            <person name="Kassem M."/>
            <person name="Mann M."/>
            <person name="Olsen J.V."/>
            <person name="Blagoev B."/>
        </authorList>
    </citation>
    <scope>PHOSPHORYLATION [LARGE SCALE ANALYSIS] AT SER-1173 AND SER-1176</scope>
    <scope>IDENTIFICATION BY MASS SPECTROMETRY [LARGE SCALE ANALYSIS]</scope>
</reference>
<reference key="14">
    <citation type="journal article" date="2013" name="J. Proteome Res.">
        <title>Toward a comprehensive characterization of a human cancer cell phosphoproteome.</title>
        <authorList>
            <person name="Zhou H."/>
            <person name="Di Palma S."/>
            <person name="Preisinger C."/>
            <person name="Peng M."/>
            <person name="Polat A.N."/>
            <person name="Heck A.J."/>
            <person name="Mohammed S."/>
        </authorList>
    </citation>
    <scope>PHOSPHORYLATION [LARGE SCALE ANALYSIS] AT SER-590; SER-765; SER-968; SER-1173; SER-1176; SER-1195; SER-1202 AND SER-1218</scope>
    <scope>IDENTIFICATION BY MASS SPECTROMETRY [LARGE SCALE ANALYSIS]</scope>
    <source>
        <tissue>Cervix carcinoma</tissue>
        <tissue>Erythroleukemia</tissue>
    </source>
</reference>
<reference key="15">
    <citation type="journal article" date="2014" name="J. Proteomics">
        <title>An enzyme assisted RP-RPLC approach for in-depth analysis of human liver phosphoproteome.</title>
        <authorList>
            <person name="Bian Y."/>
            <person name="Song C."/>
            <person name="Cheng K."/>
            <person name="Dong M."/>
            <person name="Wang F."/>
            <person name="Huang J."/>
            <person name="Sun D."/>
            <person name="Wang L."/>
            <person name="Ye M."/>
            <person name="Zou H."/>
        </authorList>
    </citation>
    <scope>PHOSPHORYLATION [LARGE SCALE ANALYSIS] AT SER-1173 AND SER-1195</scope>
    <scope>IDENTIFICATION BY MASS SPECTROMETRY [LARGE SCALE ANALYSIS]</scope>
    <source>
        <tissue>Liver</tissue>
    </source>
</reference>
<reference key="16">
    <citation type="submission" date="2007-08" db="PDB data bank">
        <title>Solution structure of the N-terminus extended RhoGAP domain from human Rho GTPase activating protein 5 variant.</title>
        <authorList>
            <consortium name="RIKEN structural genomics initiative (RSGI)"/>
        </authorList>
    </citation>
    <scope>STRUCTURE BY NMR OF 1245-1456</scope>
</reference>
<reference evidence="14" key="17">
    <citation type="journal article" date="2017" name="Nat. Commun.">
        <title>p190RhoGAP proteins contain pseudoGTPase domains.</title>
        <authorList>
            <person name="Stiegler A.L."/>
            <person name="Boggon T.J."/>
        </authorList>
    </citation>
    <scope>X-RAY CRYSTALLOGRAPHY (2.60 ANGSTROMS) OF 590-763</scope>
    <scope>DOMAIN</scope>
</reference>
<organism>
    <name type="scientific">Homo sapiens</name>
    <name type="common">Human</name>
    <dbReference type="NCBI Taxonomy" id="9606"/>
    <lineage>
        <taxon>Eukaryota</taxon>
        <taxon>Metazoa</taxon>
        <taxon>Chordata</taxon>
        <taxon>Craniata</taxon>
        <taxon>Vertebrata</taxon>
        <taxon>Euteleostomi</taxon>
        <taxon>Mammalia</taxon>
        <taxon>Eutheria</taxon>
        <taxon>Euarchontoglires</taxon>
        <taxon>Primates</taxon>
        <taxon>Haplorrhini</taxon>
        <taxon>Catarrhini</taxon>
        <taxon>Hominidae</taxon>
        <taxon>Homo</taxon>
    </lineage>
</organism>
<accession>Q13017</accession>
<accession>A1L375</accession>
<accession>A1L376</accession>
<accession>A8KAA1</accession>
<accession>D3DS89</accession>
<accession>D3DS90</accession>
<accession>Q05BE8</accession>
<accession>Q05BU8</accession>
<accession>Q59ER0</accession>
<accession>Q6DHZ3</accession>
<protein>
    <recommendedName>
        <fullName>Rho GTPase-activating protein 5</fullName>
    </recommendedName>
    <alternativeName>
        <fullName>Rho-type GTPase-activating protein 5</fullName>
    </alternativeName>
    <alternativeName>
        <fullName evidence="9 10">p190-B</fullName>
    </alternativeName>
</protein>
<name>RHG05_HUMAN</name>
<feature type="chain" id="PRO_0000056702" description="Rho GTPase-activating protein 5">
    <location>
        <begin position="1"/>
        <end position="1502"/>
    </location>
</feature>
<feature type="domain" description="FF 1" evidence="2">
    <location>
        <begin position="267"/>
        <end position="325"/>
    </location>
</feature>
<feature type="domain" description="FF 2" evidence="2">
    <location>
        <begin position="366"/>
        <end position="420"/>
    </location>
</feature>
<feature type="domain" description="FF 3" evidence="2">
    <location>
        <begin position="427"/>
        <end position="481"/>
    </location>
</feature>
<feature type="domain" description="FF 4" evidence="2">
    <location>
        <begin position="482"/>
        <end position="548"/>
    </location>
</feature>
<feature type="domain" description="pG1 pseudoGTPase" evidence="3">
    <location>
        <begin position="590"/>
        <end position="763"/>
    </location>
</feature>
<feature type="domain" description="pG2 pseudoGTPase" evidence="4">
    <location>
        <begin position="779"/>
        <end position="944"/>
    </location>
</feature>
<feature type="domain" description="Rho-GAP" evidence="1">
    <location>
        <begin position="1262"/>
        <end position="1449"/>
    </location>
</feature>
<feature type="region of interest" description="Disordered" evidence="5">
    <location>
        <begin position="975"/>
        <end position="1004"/>
    </location>
</feature>
<feature type="region of interest" description="Disordered" evidence="5">
    <location>
        <begin position="1022"/>
        <end position="1050"/>
    </location>
</feature>
<feature type="region of interest" description="Disordered" evidence="5">
    <location>
        <begin position="1069"/>
        <end position="1089"/>
    </location>
</feature>
<feature type="region of interest" description="Disordered" evidence="5">
    <location>
        <begin position="1125"/>
        <end position="1156"/>
    </location>
</feature>
<feature type="region of interest" description="Disordered" evidence="5">
    <location>
        <begin position="1168"/>
        <end position="1254"/>
    </location>
</feature>
<feature type="compositionally biased region" description="Pro residues" evidence="5">
    <location>
        <begin position="1036"/>
        <end position="1045"/>
    </location>
</feature>
<feature type="compositionally biased region" description="Basic and acidic residues" evidence="5">
    <location>
        <begin position="1140"/>
        <end position="1150"/>
    </location>
</feature>
<feature type="site" description="Arginine finger; crucial for GTP hydrolysis by stabilizing the transition state" evidence="1">
    <location>
        <position position="1297"/>
    </location>
</feature>
<feature type="modified residue" description="3'-nitrotyrosine" evidence="15">
    <location>
        <position position="550"/>
    </location>
</feature>
<feature type="modified residue" description="Phosphoserine" evidence="21">
    <location>
        <position position="590"/>
    </location>
</feature>
<feature type="modified residue" description="Phosphoserine" evidence="17 19 21">
    <location>
        <position position="765"/>
    </location>
</feature>
<feature type="modified residue" description="Phosphoserine" evidence="19">
    <location>
        <position position="951"/>
    </location>
</feature>
<feature type="modified residue" description="Phosphoserine" evidence="16 21">
    <location>
        <position position="968"/>
    </location>
</feature>
<feature type="modified residue" description="Phosphoserine" evidence="16">
    <location>
        <position position="1115"/>
    </location>
</feature>
<feature type="modified residue" description="Phosphoserine" evidence="20 21 22">
    <location>
        <position position="1173"/>
    </location>
</feature>
<feature type="modified residue" description="Phosphoserine" evidence="16 20 21">
    <location>
        <position position="1176"/>
    </location>
</feature>
<feature type="modified residue" description="Phosphoserine" evidence="16 18 21 22">
    <location>
        <position position="1195"/>
    </location>
</feature>
<feature type="modified residue" description="Phosphoserine" evidence="16 17 18 19 21">
    <location>
        <position position="1202"/>
    </location>
</feature>
<feature type="modified residue" description="Phosphoserine" evidence="16 21">
    <location>
        <position position="1218"/>
    </location>
</feature>
<feature type="splice variant" id="VSP_034164" description="In isoform 3." evidence="8">
    <location>
        <begin position="1"/>
        <end position="1265"/>
    </location>
</feature>
<feature type="splice variant" id="VSP_034165" description="In isoform 4." evidence="8">
    <location>
        <begin position="1"/>
        <end position="1261"/>
    </location>
</feature>
<feature type="splice variant" id="VSP_034166" description="In isoform 2." evidence="11">
    <location>
        <position position="1240"/>
    </location>
</feature>
<feature type="splice variant" id="VSP_034167" description="In isoform 3." evidence="8">
    <original>DLVTAEKPIPLFVEKCVEFIEDT</original>
    <variation>MSLPPPPPGPLPLRRRRRRPTLL</variation>
    <location>
        <begin position="1266"/>
        <end position="1288"/>
    </location>
</feature>
<feature type="sequence variant" id="VAR_043980" description="In dbSNP:rs17386818.">
    <original>I</original>
    <variation>V</variation>
    <location>
        <position position="17"/>
    </location>
</feature>
<feature type="sequence conflict" description="In Ref. 3; AAH50059." evidence="12" ref="3">
    <original>Q</original>
    <variation>R</variation>
    <location>
        <position position="80"/>
    </location>
</feature>
<feature type="sequence conflict" description="In Ref. 4; BAF85655." evidence="12" ref="4">
    <original>E</original>
    <variation>G</variation>
    <location>
        <position position="409"/>
    </location>
</feature>
<feature type="sequence conflict" description="In Ref. 5; BAD92988." evidence="12" ref="5">
    <original>L</original>
    <variation>F</variation>
    <location>
        <position position="541"/>
    </location>
</feature>
<feature type="sequence conflict" description="In Ref. 4; BAF85655." evidence="12" ref="4">
    <original>D</original>
    <variation>G</variation>
    <location>
        <position position="620"/>
    </location>
</feature>
<feature type="sequence conflict" description="In Ref. 3; AAH50059." evidence="12" ref="3">
    <original>D</original>
    <variation>G</variation>
    <location>
        <position position="1383"/>
    </location>
</feature>
<feature type="strand" evidence="25">
    <location>
        <begin position="595"/>
        <end position="601"/>
    </location>
</feature>
<feature type="helix" evidence="25">
    <location>
        <begin position="606"/>
        <end position="615"/>
    </location>
</feature>
<feature type="strand" evidence="25">
    <location>
        <begin position="622"/>
        <end position="625"/>
    </location>
</feature>
<feature type="strand" evidence="25">
    <location>
        <begin position="628"/>
        <end position="637"/>
    </location>
</feature>
<feature type="strand" evidence="25">
    <location>
        <begin position="656"/>
        <end position="664"/>
    </location>
</feature>
<feature type="helix" evidence="25">
    <location>
        <begin position="665"/>
        <end position="683"/>
    </location>
</feature>
<feature type="strand" evidence="25">
    <location>
        <begin position="696"/>
        <end position="701"/>
    </location>
</feature>
<feature type="helix" evidence="25">
    <location>
        <begin position="711"/>
        <end position="725"/>
    </location>
</feature>
<feature type="strand" evidence="25">
    <location>
        <begin position="729"/>
        <end position="732"/>
    </location>
</feature>
<feature type="helix" evidence="25">
    <location>
        <begin position="743"/>
        <end position="760"/>
    </location>
</feature>
<feature type="strand" evidence="23">
    <location>
        <begin position="1258"/>
        <end position="1262"/>
    </location>
</feature>
<feature type="helix" evidence="23">
    <location>
        <begin position="1264"/>
        <end position="1267"/>
    </location>
</feature>
<feature type="helix" evidence="23">
    <location>
        <begin position="1276"/>
        <end position="1287"/>
    </location>
</feature>
<feature type="turn" evidence="23">
    <location>
        <begin position="1293"/>
        <end position="1297"/>
    </location>
</feature>
<feature type="helix" evidence="23">
    <location>
        <begin position="1302"/>
        <end position="1314"/>
    </location>
</feature>
<feature type="helix" evidence="23">
    <location>
        <begin position="1320"/>
        <end position="1323"/>
    </location>
</feature>
<feature type="helix" evidence="23">
    <location>
        <begin position="1327"/>
        <end position="1340"/>
    </location>
</feature>
<feature type="strand" evidence="23">
    <location>
        <begin position="1341"/>
        <end position="1343"/>
    </location>
</feature>
<feature type="turn" evidence="23">
    <location>
        <begin position="1348"/>
        <end position="1350"/>
    </location>
</feature>
<feature type="helix" evidence="23">
    <location>
        <begin position="1351"/>
        <end position="1358"/>
    </location>
</feature>
<feature type="helix" evidence="23">
    <location>
        <begin position="1363"/>
        <end position="1373"/>
    </location>
</feature>
<feature type="turn" evidence="23">
    <location>
        <begin position="1374"/>
        <end position="1376"/>
    </location>
</feature>
<feature type="helix" evidence="23">
    <location>
        <begin position="1381"/>
        <end position="1397"/>
    </location>
</feature>
<feature type="helix" evidence="23">
    <location>
        <begin position="1399"/>
        <end position="1402"/>
    </location>
</feature>
<feature type="helix" evidence="23">
    <location>
        <begin position="1406"/>
        <end position="1417"/>
    </location>
</feature>
<feature type="strand" evidence="24">
    <location>
        <begin position="1425"/>
        <end position="1427"/>
    </location>
</feature>
<feature type="helix" evidence="23">
    <location>
        <begin position="1434"/>
        <end position="1443"/>
    </location>
</feature>
<feature type="helix" evidence="23">
    <location>
        <begin position="1445"/>
        <end position="1448"/>
    </location>
</feature>
<comment type="function">
    <text evidence="7">GTPase-activating protein for Rho family members (PubMed:8537347).</text>
</comment>
<comment type="subunit">
    <text evidence="13">May interact with RASA1/p120GAP.</text>
</comment>
<comment type="interaction">
    <interactant intactId="EBI-7237884">
        <id>Q13017</id>
    </interactant>
    <interactant intactId="EBI-6930266">
        <id>P61588</id>
        <label>Rnd3</label>
    </interactant>
    <organismsDiffer>true</organismsDiffer>
    <experiments>2</experiments>
</comment>
<comment type="interaction">
    <interactant intactId="EBI-25409992">
        <id>Q13017-1</id>
    </interactant>
    <interactant intactId="EBI-1752361">
        <id>Q8IZD9</id>
        <label>DOCK3</label>
    </interactant>
    <organismsDiffer>false</organismsDiffer>
    <experiments>2</experiments>
</comment>
<comment type="subcellular location">
    <subcellularLocation>
        <location evidence="7">Cytoplasm</location>
    </subcellularLocation>
    <subcellularLocation>
        <location evidence="7">Cell membrane</location>
        <topology evidence="7">Peripheral membrane protein</topology>
    </subcellularLocation>
    <text evidence="7">Also membrane-associated in a fibrillar pattern that colocalizes with the alpha5-beta1 integrin receptor (ITGA5/ITGB1) for fibronectin.</text>
</comment>
<comment type="alternative products">
    <event type="alternative splicing"/>
    <isoform>
        <id>Q13017-1</id>
        <name>1</name>
        <sequence type="displayed"/>
    </isoform>
    <isoform>
        <id>Q13017-2</id>
        <name>2</name>
        <sequence type="described" ref="VSP_034166"/>
    </isoform>
    <isoform>
        <id>Q13017-3</id>
        <name>3</name>
        <sequence type="described" ref="VSP_034164 VSP_034167"/>
    </isoform>
    <isoform>
        <id>Q13017-4</id>
        <name>4</name>
        <sequence type="described" ref="VSP_034165"/>
    </isoform>
</comment>
<comment type="tissue specificity">
    <text evidence="7">Detected in skin fibroblasts (at protein level) (PubMed:8537347).</text>
</comment>
<comment type="domain">
    <text evidence="6">The pG1 pseudoGTPase domain does not bind GTP.</text>
</comment>
<comment type="sequence caution" evidence="12">
    <conflict type="frameshift">
        <sequence resource="EMBL-CDS" id="AAA95963"/>
    </conflict>
</comment>
<comment type="sequence caution" evidence="12">
    <conflict type="miscellaneous discrepancy">
        <sequence resource="EMBL-CDS" id="AAH32723"/>
    </conflict>
    <text>Contaminating sequence. Potential poly-A sequence.</text>
</comment>